<organism>
    <name type="scientific">Fusobacterium nucleatum subsp. nucleatum (strain ATCC 25586 / DSM 15643 / BCRC 10681 / CIP 101130 / JCM 8532 / KCTC 2640 / LMG 13131 / VPI 4355)</name>
    <dbReference type="NCBI Taxonomy" id="190304"/>
    <lineage>
        <taxon>Bacteria</taxon>
        <taxon>Fusobacteriati</taxon>
        <taxon>Fusobacteriota</taxon>
        <taxon>Fusobacteriia</taxon>
        <taxon>Fusobacteriales</taxon>
        <taxon>Fusobacteriaceae</taxon>
        <taxon>Fusobacterium</taxon>
    </lineage>
</organism>
<sequence>MGIRNFEKIRIKLASPEKILEWSHGEVTKPETINYRTLNPERDGLFCEIIFGPTKDWECSCGKYKRMRYKGLVCEKCGVEVTRAKVRRERMGHITLASPVSHIWYSKGSPNKMSLIIGISSKELESVLYFARYIVTSSQESTVEVGKILTEKEYKLLKQLYGNKFEAYMGADGILKLLTAIDLEKLRDELENELAEANSAQKRKKLVKRLKIVRDFIASGNRPEWMILTNVPVIPAELRPMVQLDGGRFATSDLNDLYRRVINRNNRLKKLLEIRAPEIVVKNEKRMLQEAVDALIDNGRRGKPVVAQNNRELKSLSDMLKGKQGRFRQNLLGKRVDYSARSVIVVGPSLKMNQCGIPKKMALELYKPFIMRELVRRELANNIKMAKKLVEESDDKVWAVIEDVIADHPVLLNRAPTLHRLSIQAFQPVLIEGKAIRLHPLVCSAFNADFDGDQMAVHLTLSPESMMEAKLLMFAPNNIISPSSGEPIAVPSQDMVMGCFYMTKERPGEKGEGKLFSNIEQVITAYQNDKVGTHALIKVRMNGELIETTPGRVLFNEILPEIDRNYHKTYGKKEIKSLIKSLYEAHGFTETAELINRVKNFGYHYGTFAGVSVGIEDLEVPPKKKSLLNQADKEVAQIDKDYKSGKIINEERYRKTIEVWSRTTEAVTDAMMKNLDEFNPVYMMATSGARGNVSQMRQLAGMRGNMADTQGRTIEVPIKANFREGLTVLEFFMSSHGARKGLADTALRTADSGYLTRRLVDISHEVIVNEEDCHTHEGIEVEALVGANGKIIEKLSERINGRVLAEDLVHKGKKIAKRNTMIHKDLLDKIEELGIKKVKIRSPLTCALEKGVCQKCYGMDLSNYNEILLGEAVGVVAAQSIGEPGTQLTMRTFHTGGVAGAATVVNSKKAENDGEVSFRDIKTIEINGEDVVVSQGGKIIIADNEHEVDSGSVIRVTEGQKVKEGDVLVTFDPYHIPIISSHDGKVQYRHFTPKNIRDEKYDVHEYLVVRSVDSVDSEPRVHILDKKNEKLATYNIPYGAYMMVRDGAKVKKGDIIAKIIKLGEGTKDITGGLPRVQELFEARNPKGKATLAEIDGRIEILTTKKKQMRVVNVRSLENPEEFKEYLIPMGERLVVTDGLKIKAGDKITEGAISPYDVLNIKGLVAAEQFILESVQQVYRDQGVTVNDKHIEIIVKQMFRKVRIIDSGASLFLEDEVIEKRVVDLENKKLEEQGKALIKYEPVIQGITKAAVNTGSFISAASFQETTKVLSNAAIEGKVDYLEGLKENVILGKKIPAGTGFNKYKSIKVRYNTDDKPEEE</sequence>
<evidence type="ECO:0000255" key="1">
    <source>
        <dbReference type="HAMAP-Rule" id="MF_01322"/>
    </source>
</evidence>
<proteinExistence type="inferred from homology"/>
<accession>Q8RHI7</accession>
<dbReference type="EC" id="2.7.7.6" evidence="1"/>
<dbReference type="EMBL" id="AE009951">
    <property type="protein sequence ID" value="AAL94120.1"/>
    <property type="molecule type" value="Genomic_DNA"/>
</dbReference>
<dbReference type="RefSeq" id="NP_602821.1">
    <property type="nucleotide sequence ID" value="NC_003454.1"/>
</dbReference>
<dbReference type="RefSeq" id="WP_005904068.1">
    <property type="nucleotide sequence ID" value="NZ_OZ209243.1"/>
</dbReference>
<dbReference type="SMR" id="Q8RHI7"/>
<dbReference type="FunCoup" id="Q8RHI7">
    <property type="interactions" value="317"/>
</dbReference>
<dbReference type="STRING" id="190304.FN2035"/>
<dbReference type="PaxDb" id="190304-FN2035"/>
<dbReference type="EnsemblBacteria" id="AAL94120">
    <property type="protein sequence ID" value="AAL94120"/>
    <property type="gene ID" value="FN2035"/>
</dbReference>
<dbReference type="GeneID" id="79782958"/>
<dbReference type="KEGG" id="fnu:FN2035"/>
<dbReference type="PATRIC" id="fig|190304.8.peg.498"/>
<dbReference type="eggNOG" id="COG0086">
    <property type="taxonomic scope" value="Bacteria"/>
</dbReference>
<dbReference type="HOGENOM" id="CLU_000524_3_1_0"/>
<dbReference type="InParanoid" id="Q8RHI7"/>
<dbReference type="BioCyc" id="FNUC190304:G1FZS-522-MONOMER"/>
<dbReference type="Proteomes" id="UP000002521">
    <property type="component" value="Chromosome"/>
</dbReference>
<dbReference type="GO" id="GO:0000428">
    <property type="term" value="C:DNA-directed RNA polymerase complex"/>
    <property type="evidence" value="ECO:0007669"/>
    <property type="project" value="UniProtKB-KW"/>
</dbReference>
<dbReference type="GO" id="GO:0003677">
    <property type="term" value="F:DNA binding"/>
    <property type="evidence" value="ECO:0007669"/>
    <property type="project" value="UniProtKB-UniRule"/>
</dbReference>
<dbReference type="GO" id="GO:0003899">
    <property type="term" value="F:DNA-directed RNA polymerase activity"/>
    <property type="evidence" value="ECO:0007669"/>
    <property type="project" value="UniProtKB-UniRule"/>
</dbReference>
<dbReference type="GO" id="GO:0000287">
    <property type="term" value="F:magnesium ion binding"/>
    <property type="evidence" value="ECO:0007669"/>
    <property type="project" value="UniProtKB-UniRule"/>
</dbReference>
<dbReference type="GO" id="GO:0008270">
    <property type="term" value="F:zinc ion binding"/>
    <property type="evidence" value="ECO:0007669"/>
    <property type="project" value="UniProtKB-UniRule"/>
</dbReference>
<dbReference type="GO" id="GO:0006351">
    <property type="term" value="P:DNA-templated transcription"/>
    <property type="evidence" value="ECO:0007669"/>
    <property type="project" value="UniProtKB-UniRule"/>
</dbReference>
<dbReference type="CDD" id="cd02655">
    <property type="entry name" value="RNAP_beta'_C"/>
    <property type="match status" value="1"/>
</dbReference>
<dbReference type="CDD" id="cd01609">
    <property type="entry name" value="RNAP_beta'_N"/>
    <property type="match status" value="1"/>
</dbReference>
<dbReference type="Gene3D" id="1.10.132.30">
    <property type="match status" value="1"/>
</dbReference>
<dbReference type="Gene3D" id="1.10.150.390">
    <property type="match status" value="1"/>
</dbReference>
<dbReference type="Gene3D" id="1.10.1790.20">
    <property type="match status" value="1"/>
</dbReference>
<dbReference type="Gene3D" id="1.10.40.90">
    <property type="match status" value="1"/>
</dbReference>
<dbReference type="Gene3D" id="2.40.40.20">
    <property type="match status" value="1"/>
</dbReference>
<dbReference type="Gene3D" id="2.40.50.100">
    <property type="match status" value="3"/>
</dbReference>
<dbReference type="Gene3D" id="4.10.860.120">
    <property type="entry name" value="RNA polymerase II, clamp domain"/>
    <property type="match status" value="1"/>
</dbReference>
<dbReference type="Gene3D" id="1.10.274.100">
    <property type="entry name" value="RNA polymerase Rpb1, domain 3"/>
    <property type="match status" value="2"/>
</dbReference>
<dbReference type="HAMAP" id="MF_01322">
    <property type="entry name" value="RNApol_bact_RpoC"/>
    <property type="match status" value="1"/>
</dbReference>
<dbReference type="InterPro" id="IPR045867">
    <property type="entry name" value="DNA-dir_RpoC_beta_prime"/>
</dbReference>
<dbReference type="InterPro" id="IPR012754">
    <property type="entry name" value="DNA-dir_RpoC_beta_prime_bact"/>
</dbReference>
<dbReference type="InterPro" id="IPR000722">
    <property type="entry name" value="RNA_pol_asu"/>
</dbReference>
<dbReference type="InterPro" id="IPR006592">
    <property type="entry name" value="RNA_pol_N"/>
</dbReference>
<dbReference type="InterPro" id="IPR007080">
    <property type="entry name" value="RNA_pol_Rpb1_1"/>
</dbReference>
<dbReference type="InterPro" id="IPR007066">
    <property type="entry name" value="RNA_pol_Rpb1_3"/>
</dbReference>
<dbReference type="InterPro" id="IPR042102">
    <property type="entry name" value="RNA_pol_Rpb1_3_sf"/>
</dbReference>
<dbReference type="InterPro" id="IPR007083">
    <property type="entry name" value="RNA_pol_Rpb1_4"/>
</dbReference>
<dbReference type="InterPro" id="IPR007081">
    <property type="entry name" value="RNA_pol_Rpb1_5"/>
</dbReference>
<dbReference type="InterPro" id="IPR044893">
    <property type="entry name" value="RNA_pol_Rpb1_clamp_domain"/>
</dbReference>
<dbReference type="InterPro" id="IPR038120">
    <property type="entry name" value="Rpb1_funnel_sf"/>
</dbReference>
<dbReference type="NCBIfam" id="TIGR02386">
    <property type="entry name" value="rpoC_TIGR"/>
    <property type="match status" value="1"/>
</dbReference>
<dbReference type="PANTHER" id="PTHR19376">
    <property type="entry name" value="DNA-DIRECTED RNA POLYMERASE"/>
    <property type="match status" value="1"/>
</dbReference>
<dbReference type="PANTHER" id="PTHR19376:SF54">
    <property type="entry name" value="DNA-DIRECTED RNA POLYMERASE SUBUNIT BETA"/>
    <property type="match status" value="1"/>
</dbReference>
<dbReference type="Pfam" id="PF04997">
    <property type="entry name" value="RNA_pol_Rpb1_1"/>
    <property type="match status" value="1"/>
</dbReference>
<dbReference type="Pfam" id="PF00623">
    <property type="entry name" value="RNA_pol_Rpb1_2"/>
    <property type="match status" value="2"/>
</dbReference>
<dbReference type="Pfam" id="PF04983">
    <property type="entry name" value="RNA_pol_Rpb1_3"/>
    <property type="match status" value="1"/>
</dbReference>
<dbReference type="Pfam" id="PF05000">
    <property type="entry name" value="RNA_pol_Rpb1_4"/>
    <property type="match status" value="1"/>
</dbReference>
<dbReference type="Pfam" id="PF04998">
    <property type="entry name" value="RNA_pol_Rpb1_5"/>
    <property type="match status" value="1"/>
</dbReference>
<dbReference type="SMART" id="SM00663">
    <property type="entry name" value="RPOLA_N"/>
    <property type="match status" value="1"/>
</dbReference>
<dbReference type="SUPFAM" id="SSF64484">
    <property type="entry name" value="beta and beta-prime subunits of DNA dependent RNA-polymerase"/>
    <property type="match status" value="1"/>
</dbReference>
<keyword id="KW-0240">DNA-directed RNA polymerase</keyword>
<keyword id="KW-0460">Magnesium</keyword>
<keyword id="KW-0479">Metal-binding</keyword>
<keyword id="KW-0548">Nucleotidyltransferase</keyword>
<keyword id="KW-1185">Reference proteome</keyword>
<keyword id="KW-0804">Transcription</keyword>
<keyword id="KW-0808">Transferase</keyword>
<keyword id="KW-0862">Zinc</keyword>
<name>RPOC_FUSNN</name>
<comment type="function">
    <text evidence="1">DNA-dependent RNA polymerase catalyzes the transcription of DNA into RNA using the four ribonucleoside triphosphates as substrates.</text>
</comment>
<comment type="catalytic activity">
    <reaction evidence="1">
        <text>RNA(n) + a ribonucleoside 5'-triphosphate = RNA(n+1) + diphosphate</text>
        <dbReference type="Rhea" id="RHEA:21248"/>
        <dbReference type="Rhea" id="RHEA-COMP:14527"/>
        <dbReference type="Rhea" id="RHEA-COMP:17342"/>
        <dbReference type="ChEBI" id="CHEBI:33019"/>
        <dbReference type="ChEBI" id="CHEBI:61557"/>
        <dbReference type="ChEBI" id="CHEBI:140395"/>
        <dbReference type="EC" id="2.7.7.6"/>
    </reaction>
</comment>
<comment type="cofactor">
    <cofactor evidence="1">
        <name>Mg(2+)</name>
        <dbReference type="ChEBI" id="CHEBI:18420"/>
    </cofactor>
    <text evidence="1">Binds 1 Mg(2+) ion per subunit.</text>
</comment>
<comment type="cofactor">
    <cofactor evidence="1">
        <name>Zn(2+)</name>
        <dbReference type="ChEBI" id="CHEBI:29105"/>
    </cofactor>
    <text evidence="1">Binds 2 Zn(2+) ions per subunit.</text>
</comment>
<comment type="subunit">
    <text evidence="1">The RNAP catalytic core consists of 2 alpha, 1 beta, 1 beta' and 1 omega subunit. When a sigma factor is associated with the core the holoenzyme is formed, which can initiate transcription.</text>
</comment>
<comment type="similarity">
    <text evidence="1">Belongs to the RNA polymerase beta' chain family.</text>
</comment>
<reference key="1">
    <citation type="journal article" date="2002" name="J. Bacteriol.">
        <title>Genome sequence and analysis of the oral bacterium Fusobacterium nucleatum strain ATCC 25586.</title>
        <authorList>
            <person name="Kapatral V."/>
            <person name="Anderson I."/>
            <person name="Ivanova N."/>
            <person name="Reznik G."/>
            <person name="Los T."/>
            <person name="Lykidis A."/>
            <person name="Bhattacharyya A."/>
            <person name="Bartman A."/>
            <person name="Gardner W."/>
            <person name="Grechkin G."/>
            <person name="Zhu L."/>
            <person name="Vasieva O."/>
            <person name="Chu L."/>
            <person name="Kogan Y."/>
            <person name="Chaga O."/>
            <person name="Goltsman E."/>
            <person name="Bernal A."/>
            <person name="Larsen N."/>
            <person name="D'Souza M."/>
            <person name="Walunas T."/>
            <person name="Pusch G."/>
            <person name="Haselkorn R."/>
            <person name="Fonstein M."/>
            <person name="Kyrpides N.C."/>
            <person name="Overbeek R."/>
        </authorList>
    </citation>
    <scope>NUCLEOTIDE SEQUENCE [LARGE SCALE GENOMIC DNA]</scope>
    <source>
        <strain>ATCC 25586 / DSM 15643 / BCRC 10681 / CIP 101130 / JCM 8532 / KCTC 2640 / LMG 13131 / VPI 4355</strain>
    </source>
</reference>
<gene>
    <name evidence="1" type="primary">rpoC</name>
    <name type="ordered locus">FN2035</name>
</gene>
<protein>
    <recommendedName>
        <fullName evidence="1">DNA-directed RNA polymerase subunit beta'</fullName>
        <shortName evidence="1">RNAP subunit beta'</shortName>
        <ecNumber evidence="1">2.7.7.6</ecNumber>
    </recommendedName>
    <alternativeName>
        <fullName evidence="1">RNA polymerase subunit beta'</fullName>
    </alternativeName>
    <alternativeName>
        <fullName evidence="1">Transcriptase subunit beta'</fullName>
    </alternativeName>
</protein>
<feature type="chain" id="PRO_0000067745" description="DNA-directed RNA polymerase subunit beta'">
    <location>
        <begin position="1"/>
        <end position="1319"/>
    </location>
</feature>
<feature type="binding site" evidence="1">
    <location>
        <position position="59"/>
    </location>
    <ligand>
        <name>Zn(2+)</name>
        <dbReference type="ChEBI" id="CHEBI:29105"/>
        <label>1</label>
    </ligand>
</feature>
<feature type="binding site" evidence="1">
    <location>
        <position position="61"/>
    </location>
    <ligand>
        <name>Zn(2+)</name>
        <dbReference type="ChEBI" id="CHEBI:29105"/>
        <label>1</label>
    </ligand>
</feature>
<feature type="binding site" evidence="1">
    <location>
        <position position="74"/>
    </location>
    <ligand>
        <name>Zn(2+)</name>
        <dbReference type="ChEBI" id="CHEBI:29105"/>
        <label>1</label>
    </ligand>
</feature>
<feature type="binding site" evidence="1">
    <location>
        <position position="77"/>
    </location>
    <ligand>
        <name>Zn(2+)</name>
        <dbReference type="ChEBI" id="CHEBI:29105"/>
        <label>1</label>
    </ligand>
</feature>
<feature type="binding site" evidence="1">
    <location>
        <position position="449"/>
    </location>
    <ligand>
        <name>Mg(2+)</name>
        <dbReference type="ChEBI" id="CHEBI:18420"/>
    </ligand>
</feature>
<feature type="binding site" evidence="1">
    <location>
        <position position="451"/>
    </location>
    <ligand>
        <name>Mg(2+)</name>
        <dbReference type="ChEBI" id="CHEBI:18420"/>
    </ligand>
</feature>
<feature type="binding site" evidence="1">
    <location>
        <position position="453"/>
    </location>
    <ligand>
        <name>Mg(2+)</name>
        <dbReference type="ChEBI" id="CHEBI:18420"/>
    </ligand>
</feature>
<feature type="binding site" evidence="1">
    <location>
        <position position="773"/>
    </location>
    <ligand>
        <name>Zn(2+)</name>
        <dbReference type="ChEBI" id="CHEBI:29105"/>
        <label>2</label>
    </ligand>
</feature>
<feature type="binding site" evidence="1">
    <location>
        <position position="846"/>
    </location>
    <ligand>
        <name>Zn(2+)</name>
        <dbReference type="ChEBI" id="CHEBI:29105"/>
        <label>2</label>
    </ligand>
</feature>
<feature type="binding site" evidence="1">
    <location>
        <position position="853"/>
    </location>
    <ligand>
        <name>Zn(2+)</name>
        <dbReference type="ChEBI" id="CHEBI:29105"/>
        <label>2</label>
    </ligand>
</feature>
<feature type="binding site" evidence="1">
    <location>
        <position position="856"/>
    </location>
    <ligand>
        <name>Zn(2+)</name>
        <dbReference type="ChEBI" id="CHEBI:29105"/>
        <label>2</label>
    </ligand>
</feature>